<gene>
    <name type="primary">cspC</name>
    <name type="ordered locus">c2231</name>
</gene>
<dbReference type="EMBL" id="AE014075">
    <property type="protein sequence ID" value="AAN80690.1"/>
    <property type="molecule type" value="Genomic_DNA"/>
</dbReference>
<dbReference type="SMR" id="P0A9Y7"/>
<dbReference type="STRING" id="199310.c2231"/>
<dbReference type="KEGG" id="ecc:c2231"/>
<dbReference type="eggNOG" id="COG1278">
    <property type="taxonomic scope" value="Bacteria"/>
</dbReference>
<dbReference type="HOGENOM" id="CLU_117621_2_1_6"/>
<dbReference type="BioCyc" id="ECOL199310:C2231-MONOMER"/>
<dbReference type="Proteomes" id="UP000001410">
    <property type="component" value="Chromosome"/>
</dbReference>
<dbReference type="GO" id="GO:0005829">
    <property type="term" value="C:cytosol"/>
    <property type="evidence" value="ECO:0007669"/>
    <property type="project" value="UniProtKB-ARBA"/>
</dbReference>
<dbReference type="GO" id="GO:0003677">
    <property type="term" value="F:DNA binding"/>
    <property type="evidence" value="ECO:0007669"/>
    <property type="project" value="UniProtKB-KW"/>
</dbReference>
<dbReference type="CDD" id="cd04458">
    <property type="entry name" value="CSP_CDS"/>
    <property type="match status" value="1"/>
</dbReference>
<dbReference type="FunFam" id="2.40.50.140:FF:000006">
    <property type="entry name" value="Cold shock protein CspC"/>
    <property type="match status" value="1"/>
</dbReference>
<dbReference type="Gene3D" id="2.40.50.140">
    <property type="entry name" value="Nucleic acid-binding proteins"/>
    <property type="match status" value="1"/>
</dbReference>
<dbReference type="InterPro" id="IPR012156">
    <property type="entry name" value="Cold_shock_CspA"/>
</dbReference>
<dbReference type="InterPro" id="IPR050181">
    <property type="entry name" value="Cold_shock_domain"/>
</dbReference>
<dbReference type="InterPro" id="IPR011129">
    <property type="entry name" value="CSD"/>
</dbReference>
<dbReference type="InterPro" id="IPR019844">
    <property type="entry name" value="CSD_CS"/>
</dbReference>
<dbReference type="InterPro" id="IPR002059">
    <property type="entry name" value="CSP_DNA-bd"/>
</dbReference>
<dbReference type="InterPro" id="IPR012340">
    <property type="entry name" value="NA-bd_OB-fold"/>
</dbReference>
<dbReference type="NCBIfam" id="NF007062">
    <property type="entry name" value="PRK09507.1"/>
    <property type="match status" value="1"/>
</dbReference>
<dbReference type="NCBIfam" id="NF008190">
    <property type="entry name" value="PRK10943.1"/>
    <property type="match status" value="1"/>
</dbReference>
<dbReference type="PANTHER" id="PTHR11544">
    <property type="entry name" value="COLD SHOCK DOMAIN CONTAINING PROTEINS"/>
    <property type="match status" value="1"/>
</dbReference>
<dbReference type="Pfam" id="PF00313">
    <property type="entry name" value="CSD"/>
    <property type="match status" value="1"/>
</dbReference>
<dbReference type="PIRSF" id="PIRSF002599">
    <property type="entry name" value="Cold_shock_A"/>
    <property type="match status" value="1"/>
</dbReference>
<dbReference type="PRINTS" id="PR00050">
    <property type="entry name" value="COLDSHOCK"/>
</dbReference>
<dbReference type="SMART" id="SM00357">
    <property type="entry name" value="CSP"/>
    <property type="match status" value="1"/>
</dbReference>
<dbReference type="SUPFAM" id="SSF50249">
    <property type="entry name" value="Nucleic acid-binding proteins"/>
    <property type="match status" value="1"/>
</dbReference>
<dbReference type="PROSITE" id="PS00352">
    <property type="entry name" value="CSD_1"/>
    <property type="match status" value="1"/>
</dbReference>
<dbReference type="PROSITE" id="PS51857">
    <property type="entry name" value="CSD_2"/>
    <property type="match status" value="1"/>
</dbReference>
<sequence length="69" mass="7402">MAKIKGQVKWFNESKGFGFITPADGSKDVFVHFSAIQGNGFKTLAEGQNVEFEIQDGQKGPAAVNVTAI</sequence>
<feature type="initiator methionine" description="Removed" evidence="1">
    <location>
        <position position="1"/>
    </location>
</feature>
<feature type="chain" id="PRO_0000100242" description="Cold shock-like protein CspC">
    <location>
        <begin position="2"/>
        <end position="69"/>
    </location>
</feature>
<feature type="domain" description="CSD">
    <location>
        <begin position="6"/>
        <end position="66"/>
    </location>
</feature>
<comment type="subcellular location">
    <subcellularLocation>
        <location evidence="1">Cytoplasm</location>
    </subcellularLocation>
</comment>
<proteinExistence type="inferred from homology"/>
<keyword id="KW-0010">Activator</keyword>
<keyword id="KW-0963">Cytoplasm</keyword>
<keyword id="KW-0238">DNA-binding</keyword>
<keyword id="KW-1185">Reference proteome</keyword>
<keyword id="KW-0804">Transcription</keyword>
<keyword id="KW-0805">Transcription regulation</keyword>
<accession>P0A9Y7</accession>
<accession>O68636</accession>
<accession>P36996</accession>
<evidence type="ECO:0000250" key="1"/>
<protein>
    <recommendedName>
        <fullName>Cold shock-like protein CspC</fullName>
        <shortName>CSP-C</shortName>
    </recommendedName>
</protein>
<reference key="1">
    <citation type="journal article" date="2002" name="Proc. Natl. Acad. Sci. U.S.A.">
        <title>Extensive mosaic structure revealed by the complete genome sequence of uropathogenic Escherichia coli.</title>
        <authorList>
            <person name="Welch R.A."/>
            <person name="Burland V."/>
            <person name="Plunkett G. III"/>
            <person name="Redford P."/>
            <person name="Roesch P."/>
            <person name="Rasko D."/>
            <person name="Buckles E.L."/>
            <person name="Liou S.-R."/>
            <person name="Boutin A."/>
            <person name="Hackett J."/>
            <person name="Stroud D."/>
            <person name="Mayhew G.F."/>
            <person name="Rose D.J."/>
            <person name="Zhou S."/>
            <person name="Schwartz D.C."/>
            <person name="Perna N.T."/>
            <person name="Mobley H.L.T."/>
            <person name="Donnenberg M.S."/>
            <person name="Blattner F.R."/>
        </authorList>
    </citation>
    <scope>NUCLEOTIDE SEQUENCE [LARGE SCALE GENOMIC DNA]</scope>
    <source>
        <strain>CFT073 / ATCC 700928 / UPEC</strain>
    </source>
</reference>
<organism>
    <name type="scientific">Escherichia coli O6:H1 (strain CFT073 / ATCC 700928 / UPEC)</name>
    <dbReference type="NCBI Taxonomy" id="199310"/>
    <lineage>
        <taxon>Bacteria</taxon>
        <taxon>Pseudomonadati</taxon>
        <taxon>Pseudomonadota</taxon>
        <taxon>Gammaproteobacteria</taxon>
        <taxon>Enterobacterales</taxon>
        <taxon>Enterobacteriaceae</taxon>
        <taxon>Escherichia</taxon>
    </lineage>
</organism>
<name>CSPC_ECOL6</name>